<organism>
    <name type="scientific">Salmonella enteritidis PT4 (strain P125109)</name>
    <dbReference type="NCBI Taxonomy" id="550537"/>
    <lineage>
        <taxon>Bacteria</taxon>
        <taxon>Pseudomonadati</taxon>
        <taxon>Pseudomonadota</taxon>
        <taxon>Gammaproteobacteria</taxon>
        <taxon>Enterobacterales</taxon>
        <taxon>Enterobacteriaceae</taxon>
        <taxon>Salmonella</taxon>
    </lineage>
</organism>
<accession>B5QTI0</accession>
<comment type="function">
    <text evidence="1">Involved in phosphonate degradation.</text>
</comment>
<comment type="catalytic activity">
    <reaction evidence="1">
        <text>phosphonoacetaldehyde + H2O = acetaldehyde + phosphate + H(+)</text>
        <dbReference type="Rhea" id="RHEA:18905"/>
        <dbReference type="ChEBI" id="CHEBI:15343"/>
        <dbReference type="ChEBI" id="CHEBI:15377"/>
        <dbReference type="ChEBI" id="CHEBI:15378"/>
        <dbReference type="ChEBI" id="CHEBI:43474"/>
        <dbReference type="ChEBI" id="CHEBI:58383"/>
        <dbReference type="EC" id="3.11.1.1"/>
    </reaction>
</comment>
<comment type="cofactor">
    <cofactor evidence="1">
        <name>Mg(2+)</name>
        <dbReference type="ChEBI" id="CHEBI:18420"/>
    </cofactor>
    <text evidence="1">Binds 1 Mg(2+) ion per subunit.</text>
</comment>
<comment type="subunit">
    <text evidence="1">Homodimer.</text>
</comment>
<comment type="similarity">
    <text evidence="1">Belongs to the HAD-like hydrolase superfamily. PhnX family.</text>
</comment>
<evidence type="ECO:0000255" key="1">
    <source>
        <dbReference type="HAMAP-Rule" id="MF_01375"/>
    </source>
</evidence>
<gene>
    <name evidence="1" type="primary">phnX</name>
    <name type="ordered locus">SEN0414</name>
</gene>
<sequence>MMNRIHAVILDWAGTTVDFGSFAPTQIFVEAFRQAFDVEITLAEARVPMGLGKWQHIEALGKLPAVDARWQAKFGRSMSAADIDAIYAAFMPLQIAKVVDFSSPIAGVIDTIAALRAEGIKIGSCSGYPRAVMERLVPAAAEHGYRPDHWVATDDLAAGGRPGPWMALQNVIALGIDAVAHCVKVDDAAPGISEGLNAGMWTVGLAVSGNEFGATWDAYQTMSKEDVAVRREHAASKLYAAGAHYVVDSLADLSGVIAHINARLAQGERP</sequence>
<protein>
    <recommendedName>
        <fullName evidence="1">Phosphonoacetaldehyde hydrolase</fullName>
        <shortName evidence="1">Phosphonatase</shortName>
        <ecNumber evidence="1">3.11.1.1</ecNumber>
    </recommendedName>
    <alternativeName>
        <fullName evidence="1">Phosphonoacetaldehyde phosphonohydrolase</fullName>
    </alternativeName>
</protein>
<name>PHNX_SALEP</name>
<keyword id="KW-0378">Hydrolase</keyword>
<keyword id="KW-0460">Magnesium</keyword>
<keyword id="KW-0479">Metal-binding</keyword>
<keyword id="KW-0704">Schiff base</keyword>
<dbReference type="EC" id="3.11.1.1" evidence="1"/>
<dbReference type="EMBL" id="AM933172">
    <property type="protein sequence ID" value="CAR32000.1"/>
    <property type="molecule type" value="Genomic_DNA"/>
</dbReference>
<dbReference type="SMR" id="B5QTI0"/>
<dbReference type="KEGG" id="set:SEN0414"/>
<dbReference type="HOGENOM" id="CLU_045011_12_0_6"/>
<dbReference type="Proteomes" id="UP000000613">
    <property type="component" value="Chromosome"/>
</dbReference>
<dbReference type="GO" id="GO:0005829">
    <property type="term" value="C:cytosol"/>
    <property type="evidence" value="ECO:0007669"/>
    <property type="project" value="TreeGrafter"/>
</dbReference>
<dbReference type="GO" id="GO:0000287">
    <property type="term" value="F:magnesium ion binding"/>
    <property type="evidence" value="ECO:0007669"/>
    <property type="project" value="UniProtKB-UniRule"/>
</dbReference>
<dbReference type="GO" id="GO:0008967">
    <property type="term" value="F:phosphoglycolate phosphatase activity"/>
    <property type="evidence" value="ECO:0007669"/>
    <property type="project" value="TreeGrafter"/>
</dbReference>
<dbReference type="GO" id="GO:0050194">
    <property type="term" value="F:phosphonoacetaldehyde hydrolase activity"/>
    <property type="evidence" value="ECO:0007669"/>
    <property type="project" value="UniProtKB-UniRule"/>
</dbReference>
<dbReference type="GO" id="GO:0006281">
    <property type="term" value="P:DNA repair"/>
    <property type="evidence" value="ECO:0007669"/>
    <property type="project" value="TreeGrafter"/>
</dbReference>
<dbReference type="GO" id="GO:0019700">
    <property type="term" value="P:organic phosphonate catabolic process"/>
    <property type="evidence" value="ECO:0007669"/>
    <property type="project" value="InterPro"/>
</dbReference>
<dbReference type="CDD" id="cd02586">
    <property type="entry name" value="HAD_PHN"/>
    <property type="match status" value="1"/>
</dbReference>
<dbReference type="FunFam" id="1.10.150.240:FF:000006">
    <property type="entry name" value="Phosphonoacetaldehyde hydrolase"/>
    <property type="match status" value="1"/>
</dbReference>
<dbReference type="FunFam" id="3.40.50.1000:FF:000072">
    <property type="entry name" value="Phosphonoacetaldehyde hydrolase"/>
    <property type="match status" value="1"/>
</dbReference>
<dbReference type="Gene3D" id="3.40.50.1000">
    <property type="entry name" value="HAD superfamily/HAD-like"/>
    <property type="match status" value="1"/>
</dbReference>
<dbReference type="Gene3D" id="1.10.150.240">
    <property type="entry name" value="Putative phosphatase, domain 2"/>
    <property type="match status" value="1"/>
</dbReference>
<dbReference type="HAMAP" id="MF_01375">
    <property type="entry name" value="PhnX"/>
    <property type="match status" value="1"/>
</dbReference>
<dbReference type="InterPro" id="IPR050155">
    <property type="entry name" value="HAD-like_hydrolase_sf"/>
</dbReference>
<dbReference type="InterPro" id="IPR036412">
    <property type="entry name" value="HAD-like_sf"/>
</dbReference>
<dbReference type="InterPro" id="IPR006439">
    <property type="entry name" value="HAD-SF_hydro_IA"/>
</dbReference>
<dbReference type="InterPro" id="IPR023214">
    <property type="entry name" value="HAD_sf"/>
</dbReference>
<dbReference type="InterPro" id="IPR023198">
    <property type="entry name" value="PGP-like_dom2"/>
</dbReference>
<dbReference type="InterPro" id="IPR006323">
    <property type="entry name" value="Phosphonoacetald_hydro"/>
</dbReference>
<dbReference type="NCBIfam" id="TIGR01509">
    <property type="entry name" value="HAD-SF-IA-v3"/>
    <property type="match status" value="1"/>
</dbReference>
<dbReference type="NCBIfam" id="TIGR01422">
    <property type="entry name" value="phosphonatase"/>
    <property type="match status" value="1"/>
</dbReference>
<dbReference type="PANTHER" id="PTHR43434">
    <property type="entry name" value="PHOSPHOGLYCOLATE PHOSPHATASE"/>
    <property type="match status" value="1"/>
</dbReference>
<dbReference type="PANTHER" id="PTHR43434:SF19">
    <property type="entry name" value="PHOSPHONOACETALDEHYDE HYDROLASE"/>
    <property type="match status" value="1"/>
</dbReference>
<dbReference type="Pfam" id="PF00702">
    <property type="entry name" value="Hydrolase"/>
    <property type="match status" value="1"/>
</dbReference>
<dbReference type="SFLD" id="SFLDG01135">
    <property type="entry name" value="C1.5.6:_HAD__Beta-PGM__Phospha"/>
    <property type="match status" value="1"/>
</dbReference>
<dbReference type="SFLD" id="SFLDF00038">
    <property type="entry name" value="phosphonoacetaldehyde_hydrolas"/>
    <property type="match status" value="1"/>
</dbReference>
<dbReference type="SUPFAM" id="SSF56784">
    <property type="entry name" value="HAD-like"/>
    <property type="match status" value="1"/>
</dbReference>
<feature type="chain" id="PRO_1000144838" description="Phosphonoacetaldehyde hydrolase">
    <location>
        <begin position="1"/>
        <end position="270"/>
    </location>
</feature>
<feature type="active site" description="Nucleophile" evidence="1">
    <location>
        <position position="11"/>
    </location>
</feature>
<feature type="active site" description="Schiff-base intermediate with substrate" evidence="1">
    <location>
        <position position="53"/>
    </location>
</feature>
<feature type="binding site" evidence="1">
    <location>
        <position position="11"/>
    </location>
    <ligand>
        <name>Mg(2+)</name>
        <dbReference type="ChEBI" id="CHEBI:18420"/>
    </ligand>
</feature>
<feature type="binding site" evidence="1">
    <location>
        <position position="13"/>
    </location>
    <ligand>
        <name>Mg(2+)</name>
        <dbReference type="ChEBI" id="CHEBI:18420"/>
    </ligand>
</feature>
<feature type="binding site" evidence="1">
    <location>
        <position position="187"/>
    </location>
    <ligand>
        <name>Mg(2+)</name>
        <dbReference type="ChEBI" id="CHEBI:18420"/>
    </ligand>
</feature>
<reference key="1">
    <citation type="journal article" date="2008" name="Genome Res.">
        <title>Comparative genome analysis of Salmonella enteritidis PT4 and Salmonella gallinarum 287/91 provides insights into evolutionary and host adaptation pathways.</title>
        <authorList>
            <person name="Thomson N.R."/>
            <person name="Clayton D.J."/>
            <person name="Windhorst D."/>
            <person name="Vernikos G."/>
            <person name="Davidson S."/>
            <person name="Churcher C."/>
            <person name="Quail M.A."/>
            <person name="Stevens M."/>
            <person name="Jones M.A."/>
            <person name="Watson M."/>
            <person name="Barron A."/>
            <person name="Layton A."/>
            <person name="Pickard D."/>
            <person name="Kingsley R.A."/>
            <person name="Bignell A."/>
            <person name="Clark L."/>
            <person name="Harris B."/>
            <person name="Ormond D."/>
            <person name="Abdellah Z."/>
            <person name="Brooks K."/>
            <person name="Cherevach I."/>
            <person name="Chillingworth T."/>
            <person name="Woodward J."/>
            <person name="Norberczak H."/>
            <person name="Lord A."/>
            <person name="Arrowsmith C."/>
            <person name="Jagels K."/>
            <person name="Moule S."/>
            <person name="Mungall K."/>
            <person name="Saunders M."/>
            <person name="Whitehead S."/>
            <person name="Chabalgoity J.A."/>
            <person name="Maskell D."/>
            <person name="Humphreys T."/>
            <person name="Roberts M."/>
            <person name="Barrow P.A."/>
            <person name="Dougan G."/>
            <person name="Parkhill J."/>
        </authorList>
    </citation>
    <scope>NUCLEOTIDE SEQUENCE [LARGE SCALE GENOMIC DNA]</scope>
    <source>
        <strain>P125109</strain>
    </source>
</reference>
<proteinExistence type="inferred from homology"/>